<comment type="function">
    <text evidence="1">Hydrolyzes ribosome-free peptidyl-tRNAs (with 1 or more amino acids incorporated), which drop off the ribosome during protein synthesis, or as a result of ribosome stalling.</text>
</comment>
<comment type="function">
    <text evidence="1">Catalyzes the release of premature peptidyl moieties from peptidyl-tRNA molecules trapped in stalled 50S ribosomal subunits, and thus maintains levels of free tRNAs and 50S ribosomes.</text>
</comment>
<comment type="catalytic activity">
    <reaction evidence="1">
        <text>an N-acyl-L-alpha-aminoacyl-tRNA + H2O = an N-acyl-L-amino acid + a tRNA + H(+)</text>
        <dbReference type="Rhea" id="RHEA:54448"/>
        <dbReference type="Rhea" id="RHEA-COMP:10123"/>
        <dbReference type="Rhea" id="RHEA-COMP:13883"/>
        <dbReference type="ChEBI" id="CHEBI:15377"/>
        <dbReference type="ChEBI" id="CHEBI:15378"/>
        <dbReference type="ChEBI" id="CHEBI:59874"/>
        <dbReference type="ChEBI" id="CHEBI:78442"/>
        <dbReference type="ChEBI" id="CHEBI:138191"/>
        <dbReference type="EC" id="3.1.1.29"/>
    </reaction>
</comment>
<comment type="subunit">
    <text evidence="1">Monomer.</text>
</comment>
<comment type="subcellular location">
    <subcellularLocation>
        <location evidence="1">Cytoplasm</location>
    </subcellularLocation>
</comment>
<comment type="similarity">
    <text evidence="1">Belongs to the PTH family.</text>
</comment>
<dbReference type="EC" id="3.1.1.29" evidence="1"/>
<dbReference type="EMBL" id="AE008923">
    <property type="protein sequence ID" value="AAM35839.1"/>
    <property type="molecule type" value="Genomic_DNA"/>
</dbReference>
<dbReference type="RefSeq" id="WP_003486757.1">
    <property type="nucleotide sequence ID" value="NC_003919.1"/>
</dbReference>
<dbReference type="SMR" id="Q8PNT8"/>
<dbReference type="GeneID" id="66910138"/>
<dbReference type="KEGG" id="xac:XAC0952"/>
<dbReference type="eggNOG" id="COG0193">
    <property type="taxonomic scope" value="Bacteria"/>
</dbReference>
<dbReference type="HOGENOM" id="CLU_062456_3_1_6"/>
<dbReference type="Proteomes" id="UP000000576">
    <property type="component" value="Chromosome"/>
</dbReference>
<dbReference type="GO" id="GO:0005737">
    <property type="term" value="C:cytoplasm"/>
    <property type="evidence" value="ECO:0007669"/>
    <property type="project" value="UniProtKB-SubCell"/>
</dbReference>
<dbReference type="GO" id="GO:0004045">
    <property type="term" value="F:peptidyl-tRNA hydrolase activity"/>
    <property type="evidence" value="ECO:0007669"/>
    <property type="project" value="UniProtKB-UniRule"/>
</dbReference>
<dbReference type="GO" id="GO:0000049">
    <property type="term" value="F:tRNA binding"/>
    <property type="evidence" value="ECO:0007669"/>
    <property type="project" value="UniProtKB-UniRule"/>
</dbReference>
<dbReference type="GO" id="GO:0006515">
    <property type="term" value="P:protein quality control for misfolded or incompletely synthesized proteins"/>
    <property type="evidence" value="ECO:0007669"/>
    <property type="project" value="UniProtKB-UniRule"/>
</dbReference>
<dbReference type="GO" id="GO:0072344">
    <property type="term" value="P:rescue of stalled ribosome"/>
    <property type="evidence" value="ECO:0007669"/>
    <property type="project" value="UniProtKB-UniRule"/>
</dbReference>
<dbReference type="CDD" id="cd00462">
    <property type="entry name" value="PTH"/>
    <property type="match status" value="1"/>
</dbReference>
<dbReference type="FunFam" id="3.40.50.1470:FF:000001">
    <property type="entry name" value="Peptidyl-tRNA hydrolase"/>
    <property type="match status" value="1"/>
</dbReference>
<dbReference type="Gene3D" id="3.40.50.1470">
    <property type="entry name" value="Peptidyl-tRNA hydrolase"/>
    <property type="match status" value="1"/>
</dbReference>
<dbReference type="HAMAP" id="MF_00083">
    <property type="entry name" value="Pept_tRNA_hydro_bact"/>
    <property type="match status" value="1"/>
</dbReference>
<dbReference type="InterPro" id="IPR001328">
    <property type="entry name" value="Pept_tRNA_hydro"/>
</dbReference>
<dbReference type="InterPro" id="IPR018171">
    <property type="entry name" value="Pept_tRNA_hydro_CS"/>
</dbReference>
<dbReference type="InterPro" id="IPR036416">
    <property type="entry name" value="Pept_tRNA_hydro_sf"/>
</dbReference>
<dbReference type="NCBIfam" id="TIGR00447">
    <property type="entry name" value="pth"/>
    <property type="match status" value="1"/>
</dbReference>
<dbReference type="PANTHER" id="PTHR17224">
    <property type="entry name" value="PEPTIDYL-TRNA HYDROLASE"/>
    <property type="match status" value="1"/>
</dbReference>
<dbReference type="PANTHER" id="PTHR17224:SF1">
    <property type="entry name" value="PEPTIDYL-TRNA HYDROLASE"/>
    <property type="match status" value="1"/>
</dbReference>
<dbReference type="Pfam" id="PF01195">
    <property type="entry name" value="Pept_tRNA_hydro"/>
    <property type="match status" value="1"/>
</dbReference>
<dbReference type="SUPFAM" id="SSF53178">
    <property type="entry name" value="Peptidyl-tRNA hydrolase-like"/>
    <property type="match status" value="1"/>
</dbReference>
<dbReference type="PROSITE" id="PS01195">
    <property type="entry name" value="PEPT_TRNA_HYDROL_1"/>
    <property type="match status" value="1"/>
</dbReference>
<feature type="chain" id="PRO_0000187858" description="Peptidyl-tRNA hydrolase">
    <location>
        <begin position="1"/>
        <end position="193"/>
    </location>
</feature>
<feature type="active site" description="Proton acceptor" evidence="1">
    <location>
        <position position="22"/>
    </location>
</feature>
<feature type="binding site" evidence="1">
    <location>
        <position position="17"/>
    </location>
    <ligand>
        <name>tRNA</name>
        <dbReference type="ChEBI" id="CHEBI:17843"/>
    </ligand>
</feature>
<feature type="binding site" evidence="1">
    <location>
        <position position="68"/>
    </location>
    <ligand>
        <name>tRNA</name>
        <dbReference type="ChEBI" id="CHEBI:17843"/>
    </ligand>
</feature>
<feature type="binding site" evidence="1">
    <location>
        <position position="70"/>
    </location>
    <ligand>
        <name>tRNA</name>
        <dbReference type="ChEBI" id="CHEBI:17843"/>
    </ligand>
</feature>
<feature type="binding site" evidence="1">
    <location>
        <position position="116"/>
    </location>
    <ligand>
        <name>tRNA</name>
        <dbReference type="ChEBI" id="CHEBI:17843"/>
    </ligand>
</feature>
<feature type="site" description="Discriminates between blocked and unblocked aminoacyl-tRNA" evidence="1">
    <location>
        <position position="12"/>
    </location>
</feature>
<feature type="site" description="Stabilizes the basic form of H active site to accept a proton" evidence="1">
    <location>
        <position position="95"/>
    </location>
</feature>
<protein>
    <recommendedName>
        <fullName evidence="1">Peptidyl-tRNA hydrolase</fullName>
        <shortName evidence="1">Pth</shortName>
        <ecNumber evidence="1">3.1.1.29</ecNumber>
    </recommendedName>
</protein>
<name>PTH_XANAC</name>
<accession>Q8PNT8</accession>
<proteinExistence type="inferred from homology"/>
<reference key="1">
    <citation type="journal article" date="2002" name="Nature">
        <title>Comparison of the genomes of two Xanthomonas pathogens with differing host specificities.</title>
        <authorList>
            <person name="da Silva A.C.R."/>
            <person name="Ferro J.A."/>
            <person name="Reinach F.C."/>
            <person name="Farah C.S."/>
            <person name="Furlan L.R."/>
            <person name="Quaggio R.B."/>
            <person name="Monteiro-Vitorello C.B."/>
            <person name="Van Sluys M.A."/>
            <person name="Almeida N.F. Jr."/>
            <person name="Alves L.M.C."/>
            <person name="do Amaral A.M."/>
            <person name="Bertolini M.C."/>
            <person name="Camargo L.E.A."/>
            <person name="Camarotte G."/>
            <person name="Cannavan F."/>
            <person name="Cardozo J."/>
            <person name="Chambergo F."/>
            <person name="Ciapina L.P."/>
            <person name="Cicarelli R.M.B."/>
            <person name="Coutinho L.L."/>
            <person name="Cursino-Santos J.R."/>
            <person name="El-Dorry H."/>
            <person name="Faria J.B."/>
            <person name="Ferreira A.J.S."/>
            <person name="Ferreira R.C.C."/>
            <person name="Ferro M.I.T."/>
            <person name="Formighieri E.F."/>
            <person name="Franco M.C."/>
            <person name="Greggio C.C."/>
            <person name="Gruber A."/>
            <person name="Katsuyama A.M."/>
            <person name="Kishi L.T."/>
            <person name="Leite R.P."/>
            <person name="Lemos E.G.M."/>
            <person name="Lemos M.V.F."/>
            <person name="Locali E.C."/>
            <person name="Machado M.A."/>
            <person name="Madeira A.M.B.N."/>
            <person name="Martinez-Rossi N.M."/>
            <person name="Martins E.C."/>
            <person name="Meidanis J."/>
            <person name="Menck C.F.M."/>
            <person name="Miyaki C.Y."/>
            <person name="Moon D.H."/>
            <person name="Moreira L.M."/>
            <person name="Novo M.T.M."/>
            <person name="Okura V.K."/>
            <person name="Oliveira M.C."/>
            <person name="Oliveira V.R."/>
            <person name="Pereira H.A."/>
            <person name="Rossi A."/>
            <person name="Sena J.A.D."/>
            <person name="Silva C."/>
            <person name="de Souza R.F."/>
            <person name="Spinola L.A.F."/>
            <person name="Takita M.A."/>
            <person name="Tamura R.E."/>
            <person name="Teixeira E.C."/>
            <person name="Tezza R.I.D."/>
            <person name="Trindade dos Santos M."/>
            <person name="Truffi D."/>
            <person name="Tsai S.M."/>
            <person name="White F.F."/>
            <person name="Setubal J.C."/>
            <person name="Kitajima J.P."/>
        </authorList>
    </citation>
    <scope>NUCLEOTIDE SEQUENCE [LARGE SCALE GENOMIC DNA]</scope>
    <source>
        <strain>306</strain>
    </source>
</reference>
<gene>
    <name evidence="1" type="primary">pth</name>
    <name type="ordered locus">XAC0952</name>
</gene>
<sequence length="193" mass="21020">MTALRLIVGLGNPGPEHAQTRHNAGFRFVDALIERSGARWALDSKLFGETAKVEVAGQPVWLLKPATFMNLSGKSITAALRFWKIEPEHLLVAHDELDLAPGTARLKFDGGHGGQNGLRDTIRLLGHGKFHRLRVGIGHPGHKDRVVPWVLGRAGREDDAAIGAAVDAAIDVLPLAMEGNFNEAMKRLHTEKK</sequence>
<evidence type="ECO:0000255" key="1">
    <source>
        <dbReference type="HAMAP-Rule" id="MF_00083"/>
    </source>
</evidence>
<keyword id="KW-0963">Cytoplasm</keyword>
<keyword id="KW-0378">Hydrolase</keyword>
<keyword id="KW-0694">RNA-binding</keyword>
<keyword id="KW-0820">tRNA-binding</keyword>
<organism>
    <name type="scientific">Xanthomonas axonopodis pv. citri (strain 306)</name>
    <dbReference type="NCBI Taxonomy" id="190486"/>
    <lineage>
        <taxon>Bacteria</taxon>
        <taxon>Pseudomonadati</taxon>
        <taxon>Pseudomonadota</taxon>
        <taxon>Gammaproteobacteria</taxon>
        <taxon>Lysobacterales</taxon>
        <taxon>Lysobacteraceae</taxon>
        <taxon>Xanthomonas</taxon>
    </lineage>
</organism>